<accession>B7I4X8</accession>
<feature type="chain" id="PRO_1000119506" description="Trigger factor">
    <location>
        <begin position="1"/>
        <end position="444"/>
    </location>
</feature>
<feature type="domain" description="PPIase FKBP-type" evidence="1">
    <location>
        <begin position="160"/>
        <end position="245"/>
    </location>
</feature>
<proteinExistence type="inferred from homology"/>
<sequence length="444" mass="49666">MQVTTEAVSGVARRLNVSVPTSRINEQFEARLKRTAKTVKINGFRPGKVPANVVRREYGASIYQEVVNDIIRDSVFEAIQQEKINAVGMPNIEKVEHKEDALVFEATVEVYPEVEVKAFDGLEVERKTAEIKDADVDTMIENLQKQRQTWAVTKGMAKKDMQVTFDFEGSIDGEKFEGGSAEDFKLVLGSGRMIPGFEDGIIGMKAGEEKVIDVTFPEDYQAENLAGKAAQFKITVKQVEKPKLPEIDAEFLKIFGVSEEEGIEKLKADVRKNMEREVRNGLRNQVKQAAFDALVAANEIEVPAAMVAQEIDRQRQQMVQQFTQQFGGAGAQSFDKSMLPDELFKEQAERSVKLGVLVSKVLADAKLEVDQARVDAYIDDMASSYEDPTEVIEYFKNDAQQRAQIEAVVLEDQVVDHILASAKVTDKAVSYEDLLKEQQARRMG</sequence>
<name>TIG_ACIB5</name>
<comment type="function">
    <text evidence="1">Involved in protein export. Acts as a chaperone by maintaining the newly synthesized protein in an open conformation. Functions as a peptidyl-prolyl cis-trans isomerase.</text>
</comment>
<comment type="catalytic activity">
    <reaction evidence="1">
        <text>[protein]-peptidylproline (omega=180) = [protein]-peptidylproline (omega=0)</text>
        <dbReference type="Rhea" id="RHEA:16237"/>
        <dbReference type="Rhea" id="RHEA-COMP:10747"/>
        <dbReference type="Rhea" id="RHEA-COMP:10748"/>
        <dbReference type="ChEBI" id="CHEBI:83833"/>
        <dbReference type="ChEBI" id="CHEBI:83834"/>
        <dbReference type="EC" id="5.2.1.8"/>
    </reaction>
</comment>
<comment type="subcellular location">
    <subcellularLocation>
        <location>Cytoplasm</location>
    </subcellularLocation>
    <text evidence="1">About half TF is bound to the ribosome near the polypeptide exit tunnel while the other half is free in the cytoplasm.</text>
</comment>
<comment type="domain">
    <text evidence="1">Consists of 3 domains; the N-terminus binds the ribosome, the middle domain has PPIase activity, while the C-terminus has intrinsic chaperone activity on its own.</text>
</comment>
<comment type="similarity">
    <text evidence="1">Belongs to the FKBP-type PPIase family. Tig subfamily.</text>
</comment>
<organism>
    <name type="scientific">Acinetobacter baumannii (strain AB0057)</name>
    <dbReference type="NCBI Taxonomy" id="480119"/>
    <lineage>
        <taxon>Bacteria</taxon>
        <taxon>Pseudomonadati</taxon>
        <taxon>Pseudomonadota</taxon>
        <taxon>Gammaproteobacteria</taxon>
        <taxon>Moraxellales</taxon>
        <taxon>Moraxellaceae</taxon>
        <taxon>Acinetobacter</taxon>
        <taxon>Acinetobacter calcoaceticus/baumannii complex</taxon>
    </lineage>
</organism>
<gene>
    <name evidence="1" type="primary">tig</name>
    <name type="ordered locus">AB57_0579</name>
</gene>
<dbReference type="EC" id="5.2.1.8" evidence="1"/>
<dbReference type="EMBL" id="CP001182">
    <property type="protein sequence ID" value="ACJ40000.1"/>
    <property type="molecule type" value="Genomic_DNA"/>
</dbReference>
<dbReference type="RefSeq" id="WP_001198432.1">
    <property type="nucleotide sequence ID" value="NC_011586.2"/>
</dbReference>
<dbReference type="SMR" id="B7I4X8"/>
<dbReference type="GeneID" id="92892480"/>
<dbReference type="KEGG" id="abn:AB57_0579"/>
<dbReference type="HOGENOM" id="CLU_033058_2_0_6"/>
<dbReference type="Proteomes" id="UP000007094">
    <property type="component" value="Chromosome"/>
</dbReference>
<dbReference type="GO" id="GO:0005737">
    <property type="term" value="C:cytoplasm"/>
    <property type="evidence" value="ECO:0007669"/>
    <property type="project" value="UniProtKB-SubCell"/>
</dbReference>
<dbReference type="GO" id="GO:0003755">
    <property type="term" value="F:peptidyl-prolyl cis-trans isomerase activity"/>
    <property type="evidence" value="ECO:0007669"/>
    <property type="project" value="UniProtKB-UniRule"/>
</dbReference>
<dbReference type="GO" id="GO:0044183">
    <property type="term" value="F:protein folding chaperone"/>
    <property type="evidence" value="ECO:0007669"/>
    <property type="project" value="TreeGrafter"/>
</dbReference>
<dbReference type="GO" id="GO:0043022">
    <property type="term" value="F:ribosome binding"/>
    <property type="evidence" value="ECO:0007669"/>
    <property type="project" value="TreeGrafter"/>
</dbReference>
<dbReference type="GO" id="GO:0051083">
    <property type="term" value="P:'de novo' cotranslational protein folding"/>
    <property type="evidence" value="ECO:0007669"/>
    <property type="project" value="TreeGrafter"/>
</dbReference>
<dbReference type="GO" id="GO:0051301">
    <property type="term" value="P:cell division"/>
    <property type="evidence" value="ECO:0007669"/>
    <property type="project" value="UniProtKB-KW"/>
</dbReference>
<dbReference type="GO" id="GO:0061077">
    <property type="term" value="P:chaperone-mediated protein folding"/>
    <property type="evidence" value="ECO:0007669"/>
    <property type="project" value="TreeGrafter"/>
</dbReference>
<dbReference type="GO" id="GO:0015031">
    <property type="term" value="P:protein transport"/>
    <property type="evidence" value="ECO:0007669"/>
    <property type="project" value="UniProtKB-UniRule"/>
</dbReference>
<dbReference type="GO" id="GO:0043335">
    <property type="term" value="P:protein unfolding"/>
    <property type="evidence" value="ECO:0007669"/>
    <property type="project" value="TreeGrafter"/>
</dbReference>
<dbReference type="FunFam" id="3.10.50.40:FF:000001">
    <property type="entry name" value="Trigger factor"/>
    <property type="match status" value="1"/>
</dbReference>
<dbReference type="Gene3D" id="3.10.50.40">
    <property type="match status" value="1"/>
</dbReference>
<dbReference type="Gene3D" id="3.30.70.1050">
    <property type="entry name" value="Trigger factor ribosome-binding domain"/>
    <property type="match status" value="1"/>
</dbReference>
<dbReference type="Gene3D" id="1.10.3120.10">
    <property type="entry name" value="Trigger factor, C-terminal domain"/>
    <property type="match status" value="1"/>
</dbReference>
<dbReference type="HAMAP" id="MF_00303">
    <property type="entry name" value="Trigger_factor_Tig"/>
    <property type="match status" value="1"/>
</dbReference>
<dbReference type="InterPro" id="IPR046357">
    <property type="entry name" value="PPIase_dom_sf"/>
</dbReference>
<dbReference type="InterPro" id="IPR001179">
    <property type="entry name" value="PPIase_FKBP_dom"/>
</dbReference>
<dbReference type="InterPro" id="IPR005215">
    <property type="entry name" value="Trig_fac"/>
</dbReference>
<dbReference type="InterPro" id="IPR008880">
    <property type="entry name" value="Trigger_fac_C"/>
</dbReference>
<dbReference type="InterPro" id="IPR037041">
    <property type="entry name" value="Trigger_fac_C_sf"/>
</dbReference>
<dbReference type="InterPro" id="IPR008881">
    <property type="entry name" value="Trigger_fac_ribosome-bd_bac"/>
</dbReference>
<dbReference type="InterPro" id="IPR036611">
    <property type="entry name" value="Trigger_fac_ribosome-bd_sf"/>
</dbReference>
<dbReference type="InterPro" id="IPR027304">
    <property type="entry name" value="Trigger_fact/SurA_dom_sf"/>
</dbReference>
<dbReference type="NCBIfam" id="TIGR00115">
    <property type="entry name" value="tig"/>
    <property type="match status" value="1"/>
</dbReference>
<dbReference type="PANTHER" id="PTHR30560">
    <property type="entry name" value="TRIGGER FACTOR CHAPERONE AND PEPTIDYL-PROLYL CIS/TRANS ISOMERASE"/>
    <property type="match status" value="1"/>
</dbReference>
<dbReference type="PANTHER" id="PTHR30560:SF3">
    <property type="entry name" value="TRIGGER FACTOR-LIKE PROTEIN TIG, CHLOROPLASTIC"/>
    <property type="match status" value="1"/>
</dbReference>
<dbReference type="Pfam" id="PF00254">
    <property type="entry name" value="FKBP_C"/>
    <property type="match status" value="1"/>
</dbReference>
<dbReference type="Pfam" id="PF05698">
    <property type="entry name" value="Trigger_C"/>
    <property type="match status" value="1"/>
</dbReference>
<dbReference type="Pfam" id="PF05697">
    <property type="entry name" value="Trigger_N"/>
    <property type="match status" value="1"/>
</dbReference>
<dbReference type="PIRSF" id="PIRSF003095">
    <property type="entry name" value="Trigger_factor"/>
    <property type="match status" value="1"/>
</dbReference>
<dbReference type="SUPFAM" id="SSF54534">
    <property type="entry name" value="FKBP-like"/>
    <property type="match status" value="1"/>
</dbReference>
<dbReference type="SUPFAM" id="SSF109998">
    <property type="entry name" value="Triger factor/SurA peptide-binding domain-like"/>
    <property type="match status" value="1"/>
</dbReference>
<dbReference type="SUPFAM" id="SSF102735">
    <property type="entry name" value="Trigger factor ribosome-binding domain"/>
    <property type="match status" value="1"/>
</dbReference>
<dbReference type="PROSITE" id="PS50059">
    <property type="entry name" value="FKBP_PPIASE"/>
    <property type="match status" value="1"/>
</dbReference>
<reference key="1">
    <citation type="journal article" date="2008" name="J. Bacteriol.">
        <title>Comparative genome sequence analysis of multidrug-resistant Acinetobacter baumannii.</title>
        <authorList>
            <person name="Adams M.D."/>
            <person name="Goglin K."/>
            <person name="Molyneaux N."/>
            <person name="Hujer K.M."/>
            <person name="Lavender H."/>
            <person name="Jamison J.J."/>
            <person name="MacDonald I.J."/>
            <person name="Martin K.M."/>
            <person name="Russo T."/>
            <person name="Campagnari A.A."/>
            <person name="Hujer A.M."/>
            <person name="Bonomo R.A."/>
            <person name="Gill S.R."/>
        </authorList>
    </citation>
    <scope>NUCLEOTIDE SEQUENCE [LARGE SCALE GENOMIC DNA]</scope>
    <source>
        <strain>AB0057</strain>
    </source>
</reference>
<protein>
    <recommendedName>
        <fullName evidence="1">Trigger factor</fullName>
        <shortName evidence="1">TF</shortName>
        <ecNumber evidence="1">5.2.1.8</ecNumber>
    </recommendedName>
    <alternativeName>
        <fullName evidence="1">PPIase</fullName>
    </alternativeName>
</protein>
<keyword id="KW-0131">Cell cycle</keyword>
<keyword id="KW-0132">Cell division</keyword>
<keyword id="KW-0143">Chaperone</keyword>
<keyword id="KW-0963">Cytoplasm</keyword>
<keyword id="KW-0413">Isomerase</keyword>
<keyword id="KW-0697">Rotamase</keyword>
<evidence type="ECO:0000255" key="1">
    <source>
        <dbReference type="HAMAP-Rule" id="MF_00303"/>
    </source>
</evidence>